<reference key="1">
    <citation type="journal article" date="2003" name="Genome Res.">
        <title>Comparative genome analysis of Vibrio vulnificus, a marine pathogen.</title>
        <authorList>
            <person name="Chen C.-Y."/>
            <person name="Wu K.-M."/>
            <person name="Chang Y.-C."/>
            <person name="Chang C.-H."/>
            <person name="Tsai H.-C."/>
            <person name="Liao T.-L."/>
            <person name="Liu Y.-M."/>
            <person name="Chen H.-J."/>
            <person name="Shen A.B.-T."/>
            <person name="Li J.-C."/>
            <person name="Su T.-L."/>
            <person name="Shao C.-P."/>
            <person name="Lee C.-T."/>
            <person name="Hor L.-I."/>
            <person name="Tsai S.-F."/>
        </authorList>
    </citation>
    <scope>NUCLEOTIDE SEQUENCE [LARGE SCALE GENOMIC DNA]</scope>
    <source>
        <strain>YJ016</strain>
    </source>
</reference>
<accession>Q7MMR4</accession>
<feature type="chain" id="PRO_0000175225" description="Ferrochelatase">
    <location>
        <begin position="1"/>
        <end position="319"/>
    </location>
</feature>
<feature type="binding site" evidence="1">
    <location>
        <position position="194"/>
    </location>
    <ligand>
        <name>Fe cation</name>
        <dbReference type="ChEBI" id="CHEBI:24875"/>
    </ligand>
</feature>
<feature type="binding site" evidence="1">
    <location>
        <position position="275"/>
    </location>
    <ligand>
        <name>Fe cation</name>
        <dbReference type="ChEBI" id="CHEBI:24875"/>
    </ligand>
</feature>
<name>HEMH_VIBVY</name>
<evidence type="ECO:0000255" key="1">
    <source>
        <dbReference type="HAMAP-Rule" id="MF_00323"/>
    </source>
</evidence>
<evidence type="ECO:0000305" key="2"/>
<comment type="function">
    <text evidence="1">Catalyzes the ferrous insertion into protoporphyrin IX.</text>
</comment>
<comment type="catalytic activity">
    <reaction evidence="1">
        <text>heme b + 2 H(+) = protoporphyrin IX + Fe(2+)</text>
        <dbReference type="Rhea" id="RHEA:22584"/>
        <dbReference type="ChEBI" id="CHEBI:15378"/>
        <dbReference type="ChEBI" id="CHEBI:29033"/>
        <dbReference type="ChEBI" id="CHEBI:57306"/>
        <dbReference type="ChEBI" id="CHEBI:60344"/>
        <dbReference type="EC" id="4.98.1.1"/>
    </reaction>
</comment>
<comment type="pathway">
    <text evidence="1">Porphyrin-containing compound metabolism; protoheme biosynthesis; protoheme from protoporphyrin-IX: step 1/1.</text>
</comment>
<comment type="subcellular location">
    <subcellularLocation>
        <location evidence="1">Cytoplasm</location>
    </subcellularLocation>
</comment>
<comment type="similarity">
    <text evidence="1">Belongs to the ferrochelatase family.</text>
</comment>
<comment type="sequence caution" evidence="2">
    <conflict type="erroneous initiation">
        <sequence resource="EMBL-CDS" id="BAC93767"/>
    </conflict>
</comment>
<gene>
    <name evidence="1" type="primary">hemH</name>
    <name type="ordered locus">VV1003</name>
</gene>
<dbReference type="EC" id="4.98.1.1" evidence="1"/>
<dbReference type="EMBL" id="BA000037">
    <property type="protein sequence ID" value="BAC93767.1"/>
    <property type="status" value="ALT_INIT"/>
    <property type="molecule type" value="Genomic_DNA"/>
</dbReference>
<dbReference type="SMR" id="Q7MMR4"/>
<dbReference type="STRING" id="672.VV93_v1c09270"/>
<dbReference type="KEGG" id="vvy:VV1003"/>
<dbReference type="eggNOG" id="COG0276">
    <property type="taxonomic scope" value="Bacteria"/>
</dbReference>
<dbReference type="HOGENOM" id="CLU_018884_0_0_6"/>
<dbReference type="UniPathway" id="UPA00252">
    <property type="reaction ID" value="UER00325"/>
</dbReference>
<dbReference type="Proteomes" id="UP000002675">
    <property type="component" value="Chromosome I"/>
</dbReference>
<dbReference type="GO" id="GO:0005737">
    <property type="term" value="C:cytoplasm"/>
    <property type="evidence" value="ECO:0007669"/>
    <property type="project" value="UniProtKB-SubCell"/>
</dbReference>
<dbReference type="GO" id="GO:0004325">
    <property type="term" value="F:ferrochelatase activity"/>
    <property type="evidence" value="ECO:0007669"/>
    <property type="project" value="UniProtKB-UniRule"/>
</dbReference>
<dbReference type="GO" id="GO:0046872">
    <property type="term" value="F:metal ion binding"/>
    <property type="evidence" value="ECO:0007669"/>
    <property type="project" value="UniProtKB-KW"/>
</dbReference>
<dbReference type="GO" id="GO:0006783">
    <property type="term" value="P:heme biosynthetic process"/>
    <property type="evidence" value="ECO:0007669"/>
    <property type="project" value="UniProtKB-UniRule"/>
</dbReference>
<dbReference type="CDD" id="cd00419">
    <property type="entry name" value="Ferrochelatase_C"/>
    <property type="match status" value="1"/>
</dbReference>
<dbReference type="CDD" id="cd03411">
    <property type="entry name" value="Ferrochelatase_N"/>
    <property type="match status" value="1"/>
</dbReference>
<dbReference type="FunFam" id="3.40.50.1400:FF:000002">
    <property type="entry name" value="Ferrochelatase"/>
    <property type="match status" value="1"/>
</dbReference>
<dbReference type="Gene3D" id="3.40.50.1400">
    <property type="match status" value="2"/>
</dbReference>
<dbReference type="HAMAP" id="MF_00323">
    <property type="entry name" value="Ferrochelatase"/>
    <property type="match status" value="1"/>
</dbReference>
<dbReference type="InterPro" id="IPR001015">
    <property type="entry name" value="Ferrochelatase"/>
</dbReference>
<dbReference type="InterPro" id="IPR019772">
    <property type="entry name" value="Ferrochelatase_AS"/>
</dbReference>
<dbReference type="InterPro" id="IPR033644">
    <property type="entry name" value="Ferrochelatase_C"/>
</dbReference>
<dbReference type="InterPro" id="IPR033659">
    <property type="entry name" value="Ferrochelatase_N"/>
</dbReference>
<dbReference type="NCBIfam" id="TIGR00109">
    <property type="entry name" value="hemH"/>
    <property type="match status" value="1"/>
</dbReference>
<dbReference type="PANTHER" id="PTHR11108">
    <property type="entry name" value="FERROCHELATASE"/>
    <property type="match status" value="1"/>
</dbReference>
<dbReference type="PANTHER" id="PTHR11108:SF1">
    <property type="entry name" value="FERROCHELATASE, MITOCHONDRIAL"/>
    <property type="match status" value="1"/>
</dbReference>
<dbReference type="Pfam" id="PF00762">
    <property type="entry name" value="Ferrochelatase"/>
    <property type="match status" value="1"/>
</dbReference>
<dbReference type="SUPFAM" id="SSF53800">
    <property type="entry name" value="Chelatase"/>
    <property type="match status" value="1"/>
</dbReference>
<dbReference type="PROSITE" id="PS00534">
    <property type="entry name" value="FERROCHELATASE"/>
    <property type="match status" value="1"/>
</dbReference>
<proteinExistence type="inferred from homology"/>
<keyword id="KW-0963">Cytoplasm</keyword>
<keyword id="KW-0350">Heme biosynthesis</keyword>
<keyword id="KW-0408">Iron</keyword>
<keyword id="KW-0456">Lyase</keyword>
<keyword id="KW-0479">Metal-binding</keyword>
<keyword id="KW-0627">Porphyrin biosynthesis</keyword>
<protein>
    <recommendedName>
        <fullName evidence="1">Ferrochelatase</fullName>
        <ecNumber evidence="1">4.98.1.1</ecNumber>
    </recommendedName>
    <alternativeName>
        <fullName evidence="1">Heme synthase</fullName>
    </alternativeName>
    <alternativeName>
        <fullName evidence="1">Protoheme ferro-lyase</fullName>
    </alternativeName>
</protein>
<organism>
    <name type="scientific">Vibrio vulnificus (strain YJ016)</name>
    <dbReference type="NCBI Taxonomy" id="196600"/>
    <lineage>
        <taxon>Bacteria</taxon>
        <taxon>Pseudomonadati</taxon>
        <taxon>Pseudomonadota</taxon>
        <taxon>Gammaproteobacteria</taxon>
        <taxon>Vibrionales</taxon>
        <taxon>Vibrionaceae</taxon>
        <taxon>Vibrio</taxon>
    </lineage>
</organism>
<sequence length="319" mass="35998">MNNTKKRGVLLVNLGTPEEATAPAVKRFLSQFLHDQRVVDMTRWLWCPILHGIILPIRSPKVAKLYQTVWMKEGSPLMVYSKRQQVELQAKLNCPVEIGMTYGTPSVLDGVNKLQAQGVDEICVLPLYPQYSGTTTGAAYDALAHALRKVAVVPSIQFIRDYHDHPLYIKALAESVRQSWQAQGKGDYLLCSYHGIPQRYADNGDIYPLHCEMTTELLRLELGLDKSQIGTTYQSRFGREEWLQPYTDKTLESLPAKGIKSLDVITPAFSVDCLETLEEISEQGQESFLHAGGEQYRFIPCLNDAPSHIEMMARLVTER</sequence>